<comment type="function">
    <text evidence="3">The synthetic peptide has antimicrobial activity against Gram-negative bacterium B.dysenteriae (MIC=35 ug/ml), against Gram-positive bacteria S.aureus ATCC 2592 (MIC=4.7 ug/ml) and B.subtilis ATCC 6633 (MIC=9.38 ug/ml) and against fungus C.albicans (MIC=18.75 ug/ml). Has no activity against Gram-negative bacterium E.coli ATCC 25922 but exhibits low hemolytic activity at concentrations up to 200 ug/ml.</text>
</comment>
<comment type="subcellular location">
    <subcellularLocation>
        <location evidence="3">Secreted</location>
    </subcellularLocation>
</comment>
<comment type="tissue specificity">
    <text evidence="6">Expressed by the skin glands.</text>
</comment>
<comment type="mass spectrometry" mass="1974.6" method="MALDI" evidence="3"/>
<comment type="similarity">
    <text evidence="5">Belongs to the frog skin active peptide (FSAP) family. Brevinin subfamily.</text>
</comment>
<dbReference type="EMBL" id="JQ681300">
    <property type="protein sequence ID" value="AFY06638.1"/>
    <property type="molecule type" value="mRNA"/>
</dbReference>
<dbReference type="TCDB" id="1.C.52.1.32">
    <property type="family name" value="the dermaseptin (dermaseptin) family"/>
</dbReference>
<dbReference type="GO" id="GO:0005576">
    <property type="term" value="C:extracellular region"/>
    <property type="evidence" value="ECO:0007669"/>
    <property type="project" value="UniProtKB-SubCell"/>
</dbReference>
<dbReference type="GO" id="GO:0042742">
    <property type="term" value="P:defense response to bacterium"/>
    <property type="evidence" value="ECO:0007669"/>
    <property type="project" value="UniProtKB-KW"/>
</dbReference>
<dbReference type="GO" id="GO:0050832">
    <property type="term" value="P:defense response to fungus"/>
    <property type="evidence" value="ECO:0007669"/>
    <property type="project" value="UniProtKB-KW"/>
</dbReference>
<dbReference type="GO" id="GO:0031640">
    <property type="term" value="P:killing of cells of another organism"/>
    <property type="evidence" value="ECO:0007669"/>
    <property type="project" value="UniProtKB-KW"/>
</dbReference>
<dbReference type="InterPro" id="IPR004275">
    <property type="entry name" value="Frog_antimicrobial_propeptide"/>
</dbReference>
<dbReference type="Pfam" id="PF03032">
    <property type="entry name" value="FSAP_sig_propep"/>
    <property type="match status" value="1"/>
</dbReference>
<dbReference type="PROSITE" id="PS00387">
    <property type="entry name" value="PPASE"/>
    <property type="match status" value="1"/>
</dbReference>
<reference evidence="7" key="1">
    <citation type="journal article" date="2013" name="Amino Acids">
        <title>Antimicrobial peptide diversity in the skin of the torrent frog, Amolops jingdongensis.</title>
        <authorList>
            <person name="He X."/>
            <person name="Yang S."/>
            <person name="Wei L."/>
            <person name="Liu R."/>
            <person name="Lai R."/>
            <person name="Rong M."/>
        </authorList>
    </citation>
    <scope>NUCLEOTIDE SEQUENCE [MRNA]</scope>
    <scope>PROTEIN SEQUENCE OF 47-63</scope>
    <scope>FUNCTION</scope>
    <scope>SUBCELLULAR LOCATION</scope>
    <scope>MASS SPECTROMETRY</scope>
    <source>
        <tissue evidence="4">Skin</tissue>
        <tissue evidence="4">Skin secretion</tissue>
    </source>
</reference>
<keyword id="KW-0878">Amphibian defense peptide</keyword>
<keyword id="KW-0044">Antibiotic</keyword>
<keyword id="KW-0929">Antimicrobial</keyword>
<keyword id="KW-0165">Cleavage on pair of basic residues</keyword>
<keyword id="KW-0204">Cytolysis</keyword>
<keyword id="KW-0903">Direct protein sequencing</keyword>
<keyword id="KW-1015">Disulfide bond</keyword>
<keyword id="KW-0295">Fungicide</keyword>
<keyword id="KW-0354">Hemolysis</keyword>
<keyword id="KW-0964">Secreted</keyword>
<keyword id="KW-0732">Signal</keyword>
<organism evidence="7">
    <name type="scientific">Amolops jingdongensis</name>
    <name type="common">Chinese torrent frog</name>
    <dbReference type="NCBI Taxonomy" id="1077530"/>
    <lineage>
        <taxon>Eukaryota</taxon>
        <taxon>Metazoa</taxon>
        <taxon>Chordata</taxon>
        <taxon>Craniata</taxon>
        <taxon>Vertebrata</taxon>
        <taxon>Euteleostomi</taxon>
        <taxon>Amphibia</taxon>
        <taxon>Batrachia</taxon>
        <taxon>Anura</taxon>
        <taxon>Neobatrachia</taxon>
        <taxon>Ranoidea</taxon>
        <taxon>Ranidae</taxon>
        <taxon>Amolops</taxon>
    </lineage>
</organism>
<feature type="signal peptide" evidence="2">
    <location>
        <begin position="1"/>
        <end position="22"/>
    </location>
</feature>
<feature type="chain" id="PRO_0000433604" description="Jingdongin-1">
    <location>
        <begin position="23"/>
        <end position="63"/>
    </location>
</feature>
<feature type="propeptide" id="PRO_0000433605" evidence="5">
    <location>
        <begin position="23"/>
        <end position="44"/>
    </location>
</feature>
<feature type="peptide" id="PRO_0000433606" description="Jingdongin-1" evidence="3">
    <location>
        <begin position="47"/>
        <end position="63"/>
    </location>
</feature>
<feature type="disulfide bond" evidence="1">
    <location>
        <begin position="57"/>
        <end position="63"/>
    </location>
</feature>
<protein>
    <recommendedName>
        <fullName evidence="4">Jingdongin-1</fullName>
    </recommendedName>
</protein>
<name>JD1_AMOJI</name>
<proteinExistence type="evidence at protein level"/>
<accession>K7ZGS2</accession>
<sequence length="63" mass="7464">MLTLKKSMLLLFFLGTINLSLCEQERDADEEERRDDDEMDVEVEKRFLPLFLPKIICVITKKC</sequence>
<evidence type="ECO:0000250" key="1">
    <source>
        <dbReference type="UniProtKB" id="P32412"/>
    </source>
</evidence>
<evidence type="ECO:0000255" key="2"/>
<evidence type="ECO:0000269" key="3">
    <source>
    </source>
</evidence>
<evidence type="ECO:0000303" key="4">
    <source>
    </source>
</evidence>
<evidence type="ECO:0000305" key="5"/>
<evidence type="ECO:0000305" key="6">
    <source>
    </source>
</evidence>
<evidence type="ECO:0000312" key="7">
    <source>
        <dbReference type="EMBL" id="AFY06638.1"/>
    </source>
</evidence>